<proteinExistence type="evidence at transcript level"/>
<protein>
    <recommendedName>
        <fullName>Transmembrane protein 212</fullName>
    </recommendedName>
</protein>
<dbReference type="EMBL" id="AK053134">
    <property type="protein sequence ID" value="BAC35275.1"/>
    <property type="status" value="ALT_INIT"/>
    <property type="molecule type" value="mRNA"/>
</dbReference>
<dbReference type="EMBL" id="BC119391">
    <property type="protein sequence ID" value="AAI19392.1"/>
    <property type="molecule type" value="mRNA"/>
</dbReference>
<dbReference type="EMBL" id="BC119393">
    <property type="protein sequence ID" value="AAI19394.1"/>
    <property type="molecule type" value="mRNA"/>
</dbReference>
<dbReference type="CCDS" id="CCDS50876.1"/>
<dbReference type="RefSeq" id="NP_001157909.1">
    <property type="nucleotide sequence ID" value="NM_001164437.1"/>
</dbReference>
<dbReference type="SMR" id="Q8C6V3"/>
<dbReference type="STRING" id="10090.ENSMUSP00000049832"/>
<dbReference type="GlyGen" id="Q8C6V3">
    <property type="glycosylation" value="1 site"/>
</dbReference>
<dbReference type="PaxDb" id="10090-ENSMUSP00000049832"/>
<dbReference type="Antibodypedia" id="64009">
    <property type="antibodies" value="8 antibodies from 5 providers"/>
</dbReference>
<dbReference type="Ensembl" id="ENSMUST00000058077.4">
    <property type="protein sequence ID" value="ENSMUSP00000049832.4"/>
    <property type="gene ID" value="ENSMUSG00000043164.4"/>
</dbReference>
<dbReference type="GeneID" id="208613"/>
<dbReference type="KEGG" id="mmu:208613"/>
<dbReference type="UCSC" id="uc008ots.2">
    <property type="organism name" value="mouse"/>
</dbReference>
<dbReference type="AGR" id="MGI:2685410"/>
<dbReference type="CTD" id="389177"/>
<dbReference type="MGI" id="MGI:2685410">
    <property type="gene designation" value="Tmem212"/>
</dbReference>
<dbReference type="VEuPathDB" id="HostDB:ENSMUSG00000043164"/>
<dbReference type="eggNOG" id="ENOG502RXQ2">
    <property type="taxonomic scope" value="Eukaryota"/>
</dbReference>
<dbReference type="GeneTree" id="ENSGT00390000016029"/>
<dbReference type="HOGENOM" id="CLU_097593_0_0_1"/>
<dbReference type="InParanoid" id="Q8C6V3"/>
<dbReference type="OMA" id="HYEWYHL"/>
<dbReference type="OrthoDB" id="9446700at2759"/>
<dbReference type="PhylomeDB" id="Q8C6V3"/>
<dbReference type="TreeFam" id="TF337661"/>
<dbReference type="BioGRID-ORCS" id="208613">
    <property type="hits" value="3 hits in 77 CRISPR screens"/>
</dbReference>
<dbReference type="PRO" id="PR:Q8C6V3"/>
<dbReference type="Proteomes" id="UP000000589">
    <property type="component" value="Chromosome 3"/>
</dbReference>
<dbReference type="RNAct" id="Q8C6V3">
    <property type="molecule type" value="protein"/>
</dbReference>
<dbReference type="Bgee" id="ENSMUSG00000043164">
    <property type="expression patterns" value="Expressed in right lung lobe and 42 other cell types or tissues"/>
</dbReference>
<dbReference type="GO" id="GO:0016020">
    <property type="term" value="C:membrane"/>
    <property type="evidence" value="ECO:0007669"/>
    <property type="project" value="UniProtKB-SubCell"/>
</dbReference>
<keyword id="KW-0472">Membrane</keyword>
<keyword id="KW-1185">Reference proteome</keyword>
<keyword id="KW-0812">Transmembrane</keyword>
<keyword id="KW-1133">Transmembrane helix</keyword>
<evidence type="ECO:0000255" key="1"/>
<evidence type="ECO:0000305" key="2"/>
<name>TM212_MOUSE</name>
<feature type="chain" id="PRO_0000341208" description="Transmembrane protein 212">
    <location>
        <begin position="1"/>
        <end position="187"/>
    </location>
</feature>
<feature type="transmembrane region" description="Helical" evidence="1">
    <location>
        <begin position="11"/>
        <end position="31"/>
    </location>
</feature>
<feature type="transmembrane region" description="Helical" evidence="1">
    <location>
        <begin position="42"/>
        <end position="62"/>
    </location>
</feature>
<feature type="transmembrane region" description="Helical" evidence="1">
    <location>
        <begin position="76"/>
        <end position="96"/>
    </location>
</feature>
<feature type="transmembrane region" description="Helical" evidence="1">
    <location>
        <begin position="106"/>
        <end position="126"/>
    </location>
</feature>
<feature type="transmembrane region" description="Helical" evidence="1">
    <location>
        <begin position="148"/>
        <end position="168"/>
    </location>
</feature>
<gene>
    <name type="primary">Tmem212</name>
</gene>
<organism>
    <name type="scientific">Mus musculus</name>
    <name type="common">Mouse</name>
    <dbReference type="NCBI Taxonomy" id="10090"/>
    <lineage>
        <taxon>Eukaryota</taxon>
        <taxon>Metazoa</taxon>
        <taxon>Chordata</taxon>
        <taxon>Craniata</taxon>
        <taxon>Vertebrata</taxon>
        <taxon>Euteleostomi</taxon>
        <taxon>Mammalia</taxon>
        <taxon>Eutheria</taxon>
        <taxon>Euarchontoglires</taxon>
        <taxon>Glires</taxon>
        <taxon>Rodentia</taxon>
        <taxon>Myomorpha</taxon>
        <taxon>Muroidea</taxon>
        <taxon>Muridae</taxon>
        <taxon>Murinae</taxon>
        <taxon>Mus</taxon>
        <taxon>Mus</taxon>
    </lineage>
</organism>
<accession>Q8C6V3</accession>
<accession>Q0VE21</accession>
<sequence length="187" mass="20747">MKGLYQAAGRTLVTLGGLSIFSGAIAFFPVFSCKLWYTGWSVWIACPIWNGALAVTAGSLVLLAHREWTQRHLWEAVFTFVILSILGCPLHFTVALQSALLGPYCFYSFSGVAGTNYLGYVVTFPFPYTKFPSVCVDPLHYEEYHLTLQVLDLCLSLILFCVSLAVFIKLSARLMQTGYINGPENPQ</sequence>
<comment type="subcellular location">
    <subcellularLocation>
        <location evidence="2">Membrane</location>
        <topology evidence="2">Multi-pass membrane protein</topology>
    </subcellularLocation>
</comment>
<comment type="sequence caution" evidence="2">
    <conflict type="erroneous initiation">
        <sequence resource="EMBL-CDS" id="BAC35275"/>
    </conflict>
</comment>
<reference key="1">
    <citation type="journal article" date="2005" name="Science">
        <title>The transcriptional landscape of the mammalian genome.</title>
        <authorList>
            <person name="Carninci P."/>
            <person name="Kasukawa T."/>
            <person name="Katayama S."/>
            <person name="Gough J."/>
            <person name="Frith M.C."/>
            <person name="Maeda N."/>
            <person name="Oyama R."/>
            <person name="Ravasi T."/>
            <person name="Lenhard B."/>
            <person name="Wells C."/>
            <person name="Kodzius R."/>
            <person name="Shimokawa K."/>
            <person name="Bajic V.B."/>
            <person name="Brenner S.E."/>
            <person name="Batalov S."/>
            <person name="Forrest A.R."/>
            <person name="Zavolan M."/>
            <person name="Davis M.J."/>
            <person name="Wilming L.G."/>
            <person name="Aidinis V."/>
            <person name="Allen J.E."/>
            <person name="Ambesi-Impiombato A."/>
            <person name="Apweiler R."/>
            <person name="Aturaliya R.N."/>
            <person name="Bailey T.L."/>
            <person name="Bansal M."/>
            <person name="Baxter L."/>
            <person name="Beisel K.W."/>
            <person name="Bersano T."/>
            <person name="Bono H."/>
            <person name="Chalk A.M."/>
            <person name="Chiu K.P."/>
            <person name="Choudhary V."/>
            <person name="Christoffels A."/>
            <person name="Clutterbuck D.R."/>
            <person name="Crowe M.L."/>
            <person name="Dalla E."/>
            <person name="Dalrymple B.P."/>
            <person name="de Bono B."/>
            <person name="Della Gatta G."/>
            <person name="di Bernardo D."/>
            <person name="Down T."/>
            <person name="Engstrom P."/>
            <person name="Fagiolini M."/>
            <person name="Faulkner G."/>
            <person name="Fletcher C.F."/>
            <person name="Fukushima T."/>
            <person name="Furuno M."/>
            <person name="Futaki S."/>
            <person name="Gariboldi M."/>
            <person name="Georgii-Hemming P."/>
            <person name="Gingeras T.R."/>
            <person name="Gojobori T."/>
            <person name="Green R.E."/>
            <person name="Gustincich S."/>
            <person name="Harbers M."/>
            <person name="Hayashi Y."/>
            <person name="Hensch T.K."/>
            <person name="Hirokawa N."/>
            <person name="Hill D."/>
            <person name="Huminiecki L."/>
            <person name="Iacono M."/>
            <person name="Ikeo K."/>
            <person name="Iwama A."/>
            <person name="Ishikawa T."/>
            <person name="Jakt M."/>
            <person name="Kanapin A."/>
            <person name="Katoh M."/>
            <person name="Kawasawa Y."/>
            <person name="Kelso J."/>
            <person name="Kitamura H."/>
            <person name="Kitano H."/>
            <person name="Kollias G."/>
            <person name="Krishnan S.P."/>
            <person name="Kruger A."/>
            <person name="Kummerfeld S.K."/>
            <person name="Kurochkin I.V."/>
            <person name="Lareau L.F."/>
            <person name="Lazarevic D."/>
            <person name="Lipovich L."/>
            <person name="Liu J."/>
            <person name="Liuni S."/>
            <person name="McWilliam S."/>
            <person name="Madan Babu M."/>
            <person name="Madera M."/>
            <person name="Marchionni L."/>
            <person name="Matsuda H."/>
            <person name="Matsuzawa S."/>
            <person name="Miki H."/>
            <person name="Mignone F."/>
            <person name="Miyake S."/>
            <person name="Morris K."/>
            <person name="Mottagui-Tabar S."/>
            <person name="Mulder N."/>
            <person name="Nakano N."/>
            <person name="Nakauchi H."/>
            <person name="Ng P."/>
            <person name="Nilsson R."/>
            <person name="Nishiguchi S."/>
            <person name="Nishikawa S."/>
            <person name="Nori F."/>
            <person name="Ohara O."/>
            <person name="Okazaki Y."/>
            <person name="Orlando V."/>
            <person name="Pang K.C."/>
            <person name="Pavan W.J."/>
            <person name="Pavesi G."/>
            <person name="Pesole G."/>
            <person name="Petrovsky N."/>
            <person name="Piazza S."/>
            <person name="Reed J."/>
            <person name="Reid J.F."/>
            <person name="Ring B.Z."/>
            <person name="Ringwald M."/>
            <person name="Rost B."/>
            <person name="Ruan Y."/>
            <person name="Salzberg S.L."/>
            <person name="Sandelin A."/>
            <person name="Schneider C."/>
            <person name="Schoenbach C."/>
            <person name="Sekiguchi K."/>
            <person name="Semple C.A."/>
            <person name="Seno S."/>
            <person name="Sessa L."/>
            <person name="Sheng Y."/>
            <person name="Shibata Y."/>
            <person name="Shimada H."/>
            <person name="Shimada K."/>
            <person name="Silva D."/>
            <person name="Sinclair B."/>
            <person name="Sperling S."/>
            <person name="Stupka E."/>
            <person name="Sugiura K."/>
            <person name="Sultana R."/>
            <person name="Takenaka Y."/>
            <person name="Taki K."/>
            <person name="Tammoja K."/>
            <person name="Tan S.L."/>
            <person name="Tang S."/>
            <person name="Taylor M.S."/>
            <person name="Tegner J."/>
            <person name="Teichmann S.A."/>
            <person name="Ueda H.R."/>
            <person name="van Nimwegen E."/>
            <person name="Verardo R."/>
            <person name="Wei C.L."/>
            <person name="Yagi K."/>
            <person name="Yamanishi H."/>
            <person name="Zabarovsky E."/>
            <person name="Zhu S."/>
            <person name="Zimmer A."/>
            <person name="Hide W."/>
            <person name="Bult C."/>
            <person name="Grimmond S.M."/>
            <person name="Teasdale R.D."/>
            <person name="Liu E.T."/>
            <person name="Brusic V."/>
            <person name="Quackenbush J."/>
            <person name="Wahlestedt C."/>
            <person name="Mattick J.S."/>
            <person name="Hume D.A."/>
            <person name="Kai C."/>
            <person name="Sasaki D."/>
            <person name="Tomaru Y."/>
            <person name="Fukuda S."/>
            <person name="Kanamori-Katayama M."/>
            <person name="Suzuki M."/>
            <person name="Aoki J."/>
            <person name="Arakawa T."/>
            <person name="Iida J."/>
            <person name="Imamura K."/>
            <person name="Itoh M."/>
            <person name="Kato T."/>
            <person name="Kawaji H."/>
            <person name="Kawagashira N."/>
            <person name="Kawashima T."/>
            <person name="Kojima M."/>
            <person name="Kondo S."/>
            <person name="Konno H."/>
            <person name="Nakano K."/>
            <person name="Ninomiya N."/>
            <person name="Nishio T."/>
            <person name="Okada M."/>
            <person name="Plessy C."/>
            <person name="Shibata K."/>
            <person name="Shiraki T."/>
            <person name="Suzuki S."/>
            <person name="Tagami M."/>
            <person name="Waki K."/>
            <person name="Watahiki A."/>
            <person name="Okamura-Oho Y."/>
            <person name="Suzuki H."/>
            <person name="Kawai J."/>
            <person name="Hayashizaki Y."/>
        </authorList>
    </citation>
    <scope>NUCLEOTIDE SEQUENCE [LARGE SCALE MRNA]</scope>
    <source>
        <strain>C57BL/6J</strain>
        <tissue>Lung</tissue>
    </source>
</reference>
<reference key="2">
    <citation type="journal article" date="2004" name="Genome Res.">
        <title>The status, quality, and expansion of the NIH full-length cDNA project: the Mammalian Gene Collection (MGC).</title>
        <authorList>
            <consortium name="The MGC Project Team"/>
        </authorList>
    </citation>
    <scope>NUCLEOTIDE SEQUENCE [LARGE SCALE MRNA]</scope>
    <source>
        <tissue>Brain</tissue>
    </source>
</reference>